<dbReference type="EC" id="1.18.6.1" evidence="1"/>
<dbReference type="EMBL" id="CP000804">
    <property type="protein sequence ID" value="ABU60076.1"/>
    <property type="molecule type" value="Genomic_DNA"/>
</dbReference>
<dbReference type="RefSeq" id="WP_012122497.1">
    <property type="nucleotide sequence ID" value="NC_009767.1"/>
</dbReference>
<dbReference type="SMR" id="A7NR80"/>
<dbReference type="STRING" id="383372.Rcas_4043"/>
<dbReference type="KEGG" id="rca:Rcas_4043"/>
<dbReference type="eggNOG" id="COG1348">
    <property type="taxonomic scope" value="Bacteria"/>
</dbReference>
<dbReference type="HOGENOM" id="CLU_059373_0_0_0"/>
<dbReference type="OrthoDB" id="9778641at2"/>
<dbReference type="Proteomes" id="UP000000263">
    <property type="component" value="Chromosome"/>
</dbReference>
<dbReference type="GO" id="GO:0051539">
    <property type="term" value="F:4 iron, 4 sulfur cluster binding"/>
    <property type="evidence" value="ECO:0007669"/>
    <property type="project" value="UniProtKB-KW"/>
</dbReference>
<dbReference type="GO" id="GO:0005524">
    <property type="term" value="F:ATP binding"/>
    <property type="evidence" value="ECO:0007669"/>
    <property type="project" value="UniProtKB-UniRule"/>
</dbReference>
<dbReference type="GO" id="GO:0046872">
    <property type="term" value="F:metal ion binding"/>
    <property type="evidence" value="ECO:0007669"/>
    <property type="project" value="UniProtKB-KW"/>
</dbReference>
<dbReference type="GO" id="GO:0016163">
    <property type="term" value="F:nitrogenase activity"/>
    <property type="evidence" value="ECO:0007669"/>
    <property type="project" value="UniProtKB-UniRule"/>
</dbReference>
<dbReference type="GO" id="GO:0009399">
    <property type="term" value="P:nitrogen fixation"/>
    <property type="evidence" value="ECO:0007669"/>
    <property type="project" value="UniProtKB-UniRule"/>
</dbReference>
<dbReference type="CDD" id="cd02040">
    <property type="entry name" value="NifH"/>
    <property type="match status" value="1"/>
</dbReference>
<dbReference type="Gene3D" id="3.40.50.300">
    <property type="entry name" value="P-loop containing nucleotide triphosphate hydrolases"/>
    <property type="match status" value="1"/>
</dbReference>
<dbReference type="HAMAP" id="MF_00533">
    <property type="entry name" value="NifH"/>
    <property type="match status" value="1"/>
</dbReference>
<dbReference type="InterPro" id="IPR030655">
    <property type="entry name" value="NifH/chlL_CS"/>
</dbReference>
<dbReference type="InterPro" id="IPR000392">
    <property type="entry name" value="NifH/frxC"/>
</dbReference>
<dbReference type="InterPro" id="IPR005977">
    <property type="entry name" value="Nitrogenase_Fe_NifH"/>
</dbReference>
<dbReference type="InterPro" id="IPR027417">
    <property type="entry name" value="P-loop_NTPase"/>
</dbReference>
<dbReference type="NCBIfam" id="TIGR01287">
    <property type="entry name" value="nifH"/>
    <property type="match status" value="1"/>
</dbReference>
<dbReference type="PANTHER" id="PTHR42864">
    <property type="entry name" value="LIGHT-INDEPENDENT PROTOCHLOROPHYLLIDE REDUCTASE IRON-SULFUR ATP-BINDING PROTEIN"/>
    <property type="match status" value="1"/>
</dbReference>
<dbReference type="PANTHER" id="PTHR42864:SF2">
    <property type="entry name" value="LIGHT-INDEPENDENT PROTOCHLOROPHYLLIDE REDUCTASE IRON-SULFUR ATP-BINDING PROTEIN"/>
    <property type="match status" value="1"/>
</dbReference>
<dbReference type="Pfam" id="PF00142">
    <property type="entry name" value="Fer4_NifH"/>
    <property type="match status" value="1"/>
</dbReference>
<dbReference type="PIRSF" id="PIRSF000363">
    <property type="entry name" value="Nitrogenase_iron"/>
    <property type="match status" value="1"/>
</dbReference>
<dbReference type="PRINTS" id="PR00091">
    <property type="entry name" value="NITROGNASEII"/>
</dbReference>
<dbReference type="SUPFAM" id="SSF52540">
    <property type="entry name" value="P-loop containing nucleoside triphosphate hydrolases"/>
    <property type="match status" value="1"/>
</dbReference>
<dbReference type="PROSITE" id="PS00746">
    <property type="entry name" value="NIFH_FRXC_1"/>
    <property type="match status" value="1"/>
</dbReference>
<dbReference type="PROSITE" id="PS00692">
    <property type="entry name" value="NIFH_FRXC_2"/>
    <property type="match status" value="1"/>
</dbReference>
<dbReference type="PROSITE" id="PS51026">
    <property type="entry name" value="NIFH_FRXC_3"/>
    <property type="match status" value="1"/>
</dbReference>
<feature type="chain" id="PRO_1000211887" description="Nitrogenase iron protein">
    <location>
        <begin position="1"/>
        <end position="273"/>
    </location>
</feature>
<feature type="binding site" evidence="1">
    <location>
        <begin position="8"/>
        <end position="15"/>
    </location>
    <ligand>
        <name>ATP</name>
        <dbReference type="ChEBI" id="CHEBI:30616"/>
    </ligand>
</feature>
<feature type="binding site" evidence="1">
    <location>
        <position position="95"/>
    </location>
    <ligand>
        <name>[4Fe-4S] cluster</name>
        <dbReference type="ChEBI" id="CHEBI:49883"/>
        <note>ligand shared between dimeric partners</note>
    </ligand>
</feature>
<feature type="binding site" evidence="1">
    <location>
        <position position="130"/>
    </location>
    <ligand>
        <name>[4Fe-4S] cluster</name>
        <dbReference type="ChEBI" id="CHEBI:49883"/>
        <note>ligand shared between dimeric partners</note>
    </ligand>
</feature>
<feature type="modified residue" description="ADP-ribosylarginine; by dinitrogenase reductase ADP-ribosyltransferase" evidence="1">
    <location>
        <position position="98"/>
    </location>
</feature>
<keyword id="KW-0004">4Fe-4S</keyword>
<keyword id="KW-0013">ADP-ribosylation</keyword>
<keyword id="KW-0067">ATP-binding</keyword>
<keyword id="KW-0408">Iron</keyword>
<keyword id="KW-0411">Iron-sulfur</keyword>
<keyword id="KW-0479">Metal-binding</keyword>
<keyword id="KW-0535">Nitrogen fixation</keyword>
<keyword id="KW-0547">Nucleotide-binding</keyword>
<keyword id="KW-0560">Oxidoreductase</keyword>
<keyword id="KW-1185">Reference proteome</keyword>
<proteinExistence type="inferred from homology"/>
<gene>
    <name evidence="1" type="primary">nifH</name>
    <name type="ordered locus">Rcas_4043</name>
</gene>
<evidence type="ECO:0000255" key="1">
    <source>
        <dbReference type="HAMAP-Rule" id="MF_00533"/>
    </source>
</evidence>
<sequence>MRQVAFYGKGGIGKSTTQQNTAAALASMGYRLMVVGCDPKADCTRLLLRGVRQPSVLDTLRDVGPESVQLEKVVVQGYGGVKCVESGGPEPGVGCGGRGVITAIQTLETLGAYKDDLDYVFYDVLGDVVCGGFAMPIREGYAEEIYIVCSGEYMALFAANNICKGIKKFAERGYARLGGLVCNSRLVENEQALVKEFARRLNTKMIHFIPRSKDVQRAEINKKTVIDYDPDLPQAQEYRELARKIDENDEFTIPTPITQEELEDLMREYGIVD</sequence>
<protein>
    <recommendedName>
        <fullName evidence="1">Nitrogenase iron protein</fullName>
        <ecNumber evidence="1">1.18.6.1</ecNumber>
    </recommendedName>
    <alternativeName>
        <fullName evidence="1">Nitrogenase Fe protein</fullName>
    </alternativeName>
    <alternativeName>
        <fullName evidence="1">Nitrogenase component II</fullName>
    </alternativeName>
    <alternativeName>
        <fullName evidence="1">Nitrogenase reductase</fullName>
    </alternativeName>
</protein>
<reference key="1">
    <citation type="submission" date="2007-08" db="EMBL/GenBank/DDBJ databases">
        <title>Complete sequence of Roseiflexus castenholzii DSM 13941.</title>
        <authorList>
            <consortium name="US DOE Joint Genome Institute"/>
            <person name="Copeland A."/>
            <person name="Lucas S."/>
            <person name="Lapidus A."/>
            <person name="Barry K."/>
            <person name="Glavina del Rio T."/>
            <person name="Dalin E."/>
            <person name="Tice H."/>
            <person name="Pitluck S."/>
            <person name="Thompson L.S."/>
            <person name="Brettin T."/>
            <person name="Bruce D."/>
            <person name="Detter J.C."/>
            <person name="Han C."/>
            <person name="Tapia R."/>
            <person name="Schmutz J."/>
            <person name="Larimer F."/>
            <person name="Land M."/>
            <person name="Hauser L."/>
            <person name="Kyrpides N."/>
            <person name="Mikhailova N."/>
            <person name="Bryant D.A."/>
            <person name="Hanada S."/>
            <person name="Tsukatani Y."/>
            <person name="Richardson P."/>
        </authorList>
    </citation>
    <scope>NUCLEOTIDE SEQUENCE [LARGE SCALE GENOMIC DNA]</scope>
    <source>
        <strain>DSM 13941 / HLO8</strain>
    </source>
</reference>
<accession>A7NR80</accession>
<name>NIFH_ROSCS</name>
<comment type="function">
    <text evidence="1">The key enzymatic reactions in nitrogen fixation are catalyzed by the nitrogenase complex, which has 2 components: the iron protein and the molybdenum-iron protein.</text>
</comment>
<comment type="catalytic activity">
    <reaction evidence="1">
        <text>N2 + 8 reduced [2Fe-2S]-[ferredoxin] + 16 ATP + 16 H2O = H2 + 8 oxidized [2Fe-2S]-[ferredoxin] + 2 NH4(+) + 16 ADP + 16 phosphate + 6 H(+)</text>
        <dbReference type="Rhea" id="RHEA:21448"/>
        <dbReference type="Rhea" id="RHEA-COMP:10000"/>
        <dbReference type="Rhea" id="RHEA-COMP:10001"/>
        <dbReference type="ChEBI" id="CHEBI:15377"/>
        <dbReference type="ChEBI" id="CHEBI:15378"/>
        <dbReference type="ChEBI" id="CHEBI:17997"/>
        <dbReference type="ChEBI" id="CHEBI:18276"/>
        <dbReference type="ChEBI" id="CHEBI:28938"/>
        <dbReference type="ChEBI" id="CHEBI:30616"/>
        <dbReference type="ChEBI" id="CHEBI:33737"/>
        <dbReference type="ChEBI" id="CHEBI:33738"/>
        <dbReference type="ChEBI" id="CHEBI:43474"/>
        <dbReference type="ChEBI" id="CHEBI:456216"/>
        <dbReference type="EC" id="1.18.6.1"/>
    </reaction>
</comment>
<comment type="cofactor">
    <cofactor evidence="1">
        <name>[4Fe-4S] cluster</name>
        <dbReference type="ChEBI" id="CHEBI:49883"/>
    </cofactor>
    <text evidence="1">Binds 1 [4Fe-4S] cluster per dimer.</text>
</comment>
<comment type="subunit">
    <text evidence="1">Homodimer.</text>
</comment>
<comment type="PTM">
    <text evidence="1">The reversible ADP-ribosylation of Arg-98 inactivates the nitrogenase reductase and regulates nitrogenase activity.</text>
</comment>
<comment type="similarity">
    <text evidence="1">Belongs to the NifH/BchL/ChlL family.</text>
</comment>
<organism>
    <name type="scientific">Roseiflexus castenholzii (strain DSM 13941 / HLO8)</name>
    <dbReference type="NCBI Taxonomy" id="383372"/>
    <lineage>
        <taxon>Bacteria</taxon>
        <taxon>Bacillati</taxon>
        <taxon>Chloroflexota</taxon>
        <taxon>Chloroflexia</taxon>
        <taxon>Chloroflexales</taxon>
        <taxon>Roseiflexineae</taxon>
        <taxon>Roseiflexaceae</taxon>
        <taxon>Roseiflexus</taxon>
    </lineage>
</organism>